<evidence type="ECO:0000255" key="1">
    <source>
        <dbReference type="PROSITE-ProRule" id="PRU00238"/>
    </source>
</evidence>
<feature type="signal peptide">
    <location>
        <begin position="1"/>
        <end position="16"/>
    </location>
</feature>
<feature type="chain" id="PRO_0000011201" description="Globin CTT-VIIB-7">
    <location>
        <begin position="17"/>
        <end position="162"/>
    </location>
</feature>
<feature type="domain" description="Globin" evidence="1">
    <location>
        <begin position="18"/>
        <end position="162"/>
    </location>
</feature>
<feature type="binding site" description="distal binding residue" evidence="1">
    <location>
        <position position="76"/>
    </location>
    <ligand>
        <name>heme b</name>
        <dbReference type="ChEBI" id="CHEBI:60344"/>
    </ligand>
    <ligandPart>
        <name>Fe</name>
        <dbReference type="ChEBI" id="CHEBI:18248"/>
    </ligandPart>
</feature>
<feature type="binding site" description="proximal binding residue" evidence="1">
    <location>
        <position position="111"/>
    </location>
    <ligand>
        <name>heme b</name>
        <dbReference type="ChEBI" id="CHEBI:60344"/>
    </ligand>
    <ligandPart>
        <name>Fe</name>
        <dbReference type="ChEBI" id="CHEBI:18248"/>
    </ligandPart>
</feature>
<accession>P29242</accession>
<dbReference type="EMBL" id="X56271">
    <property type="protein sequence ID" value="CAA39716.1"/>
    <property type="molecule type" value="Genomic_DNA"/>
</dbReference>
<dbReference type="PIR" id="S21631">
    <property type="entry name" value="S21631"/>
</dbReference>
<dbReference type="SMR" id="P29242"/>
<dbReference type="GO" id="GO:0005576">
    <property type="term" value="C:extracellular region"/>
    <property type="evidence" value="ECO:0007669"/>
    <property type="project" value="InterPro"/>
</dbReference>
<dbReference type="GO" id="GO:0005833">
    <property type="term" value="C:hemoglobin complex"/>
    <property type="evidence" value="ECO:0007669"/>
    <property type="project" value="InterPro"/>
</dbReference>
<dbReference type="GO" id="GO:0020037">
    <property type="term" value="F:heme binding"/>
    <property type="evidence" value="ECO:0007669"/>
    <property type="project" value="InterPro"/>
</dbReference>
<dbReference type="GO" id="GO:0046872">
    <property type="term" value="F:metal ion binding"/>
    <property type="evidence" value="ECO:0007669"/>
    <property type="project" value="UniProtKB-KW"/>
</dbReference>
<dbReference type="GO" id="GO:0019825">
    <property type="term" value="F:oxygen binding"/>
    <property type="evidence" value="ECO:0007669"/>
    <property type="project" value="InterPro"/>
</dbReference>
<dbReference type="GO" id="GO:0005344">
    <property type="term" value="F:oxygen carrier activity"/>
    <property type="evidence" value="ECO:0007669"/>
    <property type="project" value="UniProtKB-KW"/>
</dbReference>
<dbReference type="CDD" id="cd01040">
    <property type="entry name" value="Mb-like"/>
    <property type="match status" value="1"/>
</dbReference>
<dbReference type="Gene3D" id="1.10.490.10">
    <property type="entry name" value="Globins"/>
    <property type="match status" value="1"/>
</dbReference>
<dbReference type="InterPro" id="IPR002336">
    <property type="entry name" value="Erythrocruorin"/>
</dbReference>
<dbReference type="InterPro" id="IPR000971">
    <property type="entry name" value="Globin"/>
</dbReference>
<dbReference type="InterPro" id="IPR009050">
    <property type="entry name" value="Globin-like_sf"/>
</dbReference>
<dbReference type="InterPro" id="IPR012292">
    <property type="entry name" value="Globin/Proto"/>
</dbReference>
<dbReference type="InterPro" id="IPR044399">
    <property type="entry name" value="Mb-like_M"/>
</dbReference>
<dbReference type="PANTHER" id="PTHR47217">
    <property type="entry name" value="GLOBIN-LIKE PROTEIN"/>
    <property type="match status" value="1"/>
</dbReference>
<dbReference type="PANTHER" id="PTHR47217:SF1">
    <property type="entry name" value="GLOBIN-LIKE PROTEIN"/>
    <property type="match status" value="1"/>
</dbReference>
<dbReference type="Pfam" id="PF00042">
    <property type="entry name" value="Globin"/>
    <property type="match status" value="1"/>
</dbReference>
<dbReference type="PRINTS" id="PR00611">
    <property type="entry name" value="ERYTHCRUORIN"/>
</dbReference>
<dbReference type="SUPFAM" id="SSF46458">
    <property type="entry name" value="Globin-like"/>
    <property type="match status" value="1"/>
</dbReference>
<dbReference type="PROSITE" id="PS01033">
    <property type="entry name" value="GLOBIN"/>
    <property type="match status" value="1"/>
</dbReference>
<proteinExistence type="inferred from homology"/>
<reference key="1">
    <citation type="submission" date="1990-09" db="EMBL/GenBank/DDBJ databases">
        <authorList>
            <person name="Hankeln T."/>
            <person name="Rozynek P."/>
            <person name="Schmidt E.R."/>
            <person name="Broecker M."/>
        </authorList>
    </citation>
    <scope>NUCLEOTIDE SEQUENCE [GENOMIC DNA]</scope>
</reference>
<sequence length="162" mass="17288">MKFFAVLALCVVGAIASPLSADEANLVKSSWDQVKHNEVDILAAVFAAYPDIQAKFPQFAGKDLASIKDTAAFATHATRIVSFFTEVISLSGNQANLSAVYALVSKLGVDHKARGISAAQFGEFRTALVSYLQAHVSWGDNVAAAWNHALDNTYAVALKSLE</sequence>
<organism>
    <name type="scientific">Chironomus thummi piger</name>
    <name type="common">Midge</name>
    <name type="synonym">Chironomus piger</name>
    <dbReference type="NCBI Taxonomy" id="7156"/>
    <lineage>
        <taxon>Eukaryota</taxon>
        <taxon>Metazoa</taxon>
        <taxon>Ecdysozoa</taxon>
        <taxon>Arthropoda</taxon>
        <taxon>Hexapoda</taxon>
        <taxon>Insecta</taxon>
        <taxon>Pterygota</taxon>
        <taxon>Neoptera</taxon>
        <taxon>Endopterygota</taxon>
        <taxon>Diptera</taxon>
        <taxon>Nematocera</taxon>
        <taxon>Chironomoidea</taxon>
        <taxon>Chironomidae</taxon>
        <taxon>Chironominae</taxon>
        <taxon>Chironomus</taxon>
    </lineage>
</organism>
<protein>
    <recommendedName>
        <fullName>Globin CTT-VIIB-7</fullName>
    </recommendedName>
</protein>
<comment type="subunit">
    <text>Homodimer.</text>
</comment>
<comment type="miscellaneous">
    <text>There are at least 12 different components in Midge globin.</text>
</comment>
<comment type="miscellaneous">
    <text>There are at least nine genes for VIIB variants.</text>
</comment>
<comment type="similarity">
    <text evidence="1">Belongs to the globin family.</text>
</comment>
<keyword id="KW-0349">Heme</keyword>
<keyword id="KW-0408">Iron</keyword>
<keyword id="KW-0479">Metal-binding</keyword>
<keyword id="KW-0561">Oxygen transport</keyword>
<keyword id="KW-0732">Signal</keyword>
<keyword id="KW-0813">Transport</keyword>
<gene>
    <name type="primary">CTT-7B7</name>
    <name type="synonym">HbVIIb-7</name>
</gene>
<name>GLB77_CHITP</name>